<proteinExistence type="evidence at protein level"/>
<geneLocation type="chloroplast"/>
<gene>
    <name evidence="1" type="primary">psaC</name>
    <name type="synonym">frxA</name>
</gene>
<accession>P10793</accession>
<feature type="initiator methionine" description="Removed" evidence="2">
    <location>
        <position position="1"/>
    </location>
</feature>
<feature type="chain" id="PRO_0000061996" description="Photosystem I iron-sulfur center">
    <location>
        <begin position="2"/>
        <end position="81"/>
    </location>
</feature>
<feature type="domain" description="4Fe-4S ferredoxin-type 1" evidence="1">
    <location>
        <begin position="2"/>
        <end position="31"/>
    </location>
</feature>
<feature type="domain" description="4Fe-4S ferredoxin-type 2" evidence="1">
    <location>
        <begin position="39"/>
        <end position="68"/>
    </location>
</feature>
<feature type="binding site" evidence="1">
    <location>
        <position position="11"/>
    </location>
    <ligand>
        <name>[4Fe-4S] cluster</name>
        <dbReference type="ChEBI" id="CHEBI:49883"/>
        <label>1</label>
    </ligand>
</feature>
<feature type="binding site" evidence="1">
    <location>
        <position position="14"/>
    </location>
    <ligand>
        <name>[4Fe-4S] cluster</name>
        <dbReference type="ChEBI" id="CHEBI:49883"/>
        <label>1</label>
    </ligand>
</feature>
<feature type="binding site" evidence="1">
    <location>
        <position position="17"/>
    </location>
    <ligand>
        <name>[4Fe-4S] cluster</name>
        <dbReference type="ChEBI" id="CHEBI:49883"/>
        <label>1</label>
    </ligand>
</feature>
<feature type="binding site" evidence="1">
    <location>
        <position position="21"/>
    </location>
    <ligand>
        <name>[4Fe-4S] cluster</name>
        <dbReference type="ChEBI" id="CHEBI:49883"/>
        <label>2</label>
    </ligand>
</feature>
<feature type="binding site" evidence="1">
    <location>
        <position position="48"/>
    </location>
    <ligand>
        <name>[4Fe-4S] cluster</name>
        <dbReference type="ChEBI" id="CHEBI:49883"/>
        <label>2</label>
    </ligand>
</feature>
<feature type="binding site" evidence="1">
    <location>
        <position position="51"/>
    </location>
    <ligand>
        <name>[4Fe-4S] cluster</name>
        <dbReference type="ChEBI" id="CHEBI:49883"/>
        <label>2</label>
    </ligand>
</feature>
<feature type="binding site" evidence="1">
    <location>
        <position position="54"/>
    </location>
    <ligand>
        <name>[4Fe-4S] cluster</name>
        <dbReference type="ChEBI" id="CHEBI:49883"/>
        <label>2</label>
    </ligand>
</feature>
<feature type="binding site" evidence="1">
    <location>
        <position position="58"/>
    </location>
    <ligand>
        <name>[4Fe-4S] cluster</name>
        <dbReference type="ChEBI" id="CHEBI:49883"/>
        <label>1</label>
    </ligand>
</feature>
<feature type="strand" evidence="4">
    <location>
        <begin position="4"/>
        <end position="7"/>
    </location>
</feature>
<feature type="helix" evidence="4">
    <location>
        <begin position="16"/>
        <end position="20"/>
    </location>
</feature>
<feature type="turn" evidence="3">
    <location>
        <begin position="22"/>
        <end position="24"/>
    </location>
</feature>
<feature type="strand" evidence="4">
    <location>
        <begin position="27"/>
        <end position="30"/>
    </location>
</feature>
<feature type="strand" evidence="4">
    <location>
        <begin position="32"/>
        <end position="34"/>
    </location>
</feature>
<feature type="turn" evidence="3">
    <location>
        <begin position="35"/>
        <end position="37"/>
    </location>
</feature>
<feature type="strand" evidence="4">
    <location>
        <begin position="38"/>
        <end position="41"/>
    </location>
</feature>
<feature type="helix" evidence="4">
    <location>
        <begin position="45"/>
        <end position="47"/>
    </location>
</feature>
<feature type="helix" evidence="4">
    <location>
        <begin position="53"/>
        <end position="57"/>
    </location>
</feature>
<feature type="strand" evidence="4">
    <location>
        <begin position="60"/>
        <end position="62"/>
    </location>
</feature>
<feature type="strand" evidence="4">
    <location>
        <begin position="64"/>
        <end position="68"/>
    </location>
</feature>
<feature type="helix" evidence="4">
    <location>
        <begin position="74"/>
        <end position="77"/>
    </location>
</feature>
<protein>
    <recommendedName>
        <fullName evidence="1">Photosystem I iron-sulfur center</fullName>
        <ecNumber evidence="1">1.97.1.12</ecNumber>
    </recommendedName>
    <alternativeName>
        <fullName evidence="1">9 kDa polypeptide</fullName>
    </alternativeName>
    <alternativeName>
        <fullName evidence="1">PSI-C</fullName>
    </alternativeName>
    <alternativeName>
        <fullName evidence="1">Photosystem I subunit VII</fullName>
    </alternativeName>
    <alternativeName>
        <fullName evidence="1">PsaC</fullName>
    </alternativeName>
</protein>
<evidence type="ECO:0000255" key="1">
    <source>
        <dbReference type="HAMAP-Rule" id="MF_01303"/>
    </source>
</evidence>
<evidence type="ECO:0000269" key="2">
    <source>
    </source>
</evidence>
<evidence type="ECO:0007829" key="3">
    <source>
        <dbReference type="PDB" id="2WSC"/>
    </source>
</evidence>
<evidence type="ECO:0007829" key="4">
    <source>
        <dbReference type="PDB" id="6LY5"/>
    </source>
</evidence>
<dbReference type="EC" id="1.97.1.12" evidence="1"/>
<dbReference type="EMBL" id="X13157">
    <property type="protein sequence ID" value="CAA31554.1"/>
    <property type="molecule type" value="Genomic_DNA"/>
</dbReference>
<dbReference type="PIR" id="S04033">
    <property type="entry name" value="FEPM1S"/>
</dbReference>
<dbReference type="RefSeq" id="YP_003587533.1">
    <property type="nucleotide sequence ID" value="NC_014057.1"/>
</dbReference>
<dbReference type="PDB" id="2O01">
    <property type="method" value="X-ray"/>
    <property type="resolution" value="3.40 A"/>
    <property type="chains" value="C=2-81"/>
</dbReference>
<dbReference type="PDB" id="2WSC">
    <property type="method" value="X-ray"/>
    <property type="resolution" value="3.30 A"/>
    <property type="chains" value="C=1-81"/>
</dbReference>
<dbReference type="PDB" id="2WSE">
    <property type="method" value="X-ray"/>
    <property type="resolution" value="3.49 A"/>
    <property type="chains" value="C=1-81"/>
</dbReference>
<dbReference type="PDB" id="2WSF">
    <property type="method" value="X-ray"/>
    <property type="resolution" value="3.48 A"/>
    <property type="chains" value="C=1-81"/>
</dbReference>
<dbReference type="PDB" id="3LW5">
    <property type="method" value="X-ray"/>
    <property type="resolution" value="3.30 A"/>
    <property type="chains" value="C=1-81"/>
</dbReference>
<dbReference type="PDB" id="4RKU">
    <property type="method" value="X-ray"/>
    <property type="resolution" value="3.00 A"/>
    <property type="chains" value="C=2-81"/>
</dbReference>
<dbReference type="PDB" id="4XK8">
    <property type="method" value="X-ray"/>
    <property type="resolution" value="2.80 A"/>
    <property type="chains" value="C/c=2-81"/>
</dbReference>
<dbReference type="PDB" id="4Y28">
    <property type="method" value="X-ray"/>
    <property type="resolution" value="2.80 A"/>
    <property type="chains" value="C=1-81"/>
</dbReference>
<dbReference type="PDB" id="5L8R">
    <property type="method" value="X-ray"/>
    <property type="resolution" value="2.60 A"/>
    <property type="chains" value="C=1-81"/>
</dbReference>
<dbReference type="PDB" id="6LY5">
    <property type="method" value="EM"/>
    <property type="resolution" value="2.38 A"/>
    <property type="chains" value="c=2-81"/>
</dbReference>
<dbReference type="PDB" id="6YAC">
    <property type="method" value="EM"/>
    <property type="resolution" value="2.50 A"/>
    <property type="chains" value="C=2-81"/>
</dbReference>
<dbReference type="PDB" id="6YEZ">
    <property type="method" value="EM"/>
    <property type="resolution" value="2.70 A"/>
    <property type="chains" value="C=2-81"/>
</dbReference>
<dbReference type="PDB" id="6ZOO">
    <property type="method" value="EM"/>
    <property type="resolution" value="2.74 A"/>
    <property type="chains" value="C=2-81"/>
</dbReference>
<dbReference type="PDB" id="6ZXS">
    <property type="method" value="X-ray"/>
    <property type="resolution" value="3.00 A"/>
    <property type="chains" value="C=2-81"/>
</dbReference>
<dbReference type="PDB" id="7DKZ">
    <property type="method" value="X-ray"/>
    <property type="resolution" value="2.39 A"/>
    <property type="chains" value="C=1-81"/>
</dbReference>
<dbReference type="PDBsum" id="2O01"/>
<dbReference type="PDBsum" id="2WSC"/>
<dbReference type="PDBsum" id="2WSE"/>
<dbReference type="PDBsum" id="2WSF"/>
<dbReference type="PDBsum" id="3LW5"/>
<dbReference type="PDBsum" id="4RKU"/>
<dbReference type="PDBsum" id="4XK8"/>
<dbReference type="PDBsum" id="4Y28"/>
<dbReference type="PDBsum" id="5L8R"/>
<dbReference type="PDBsum" id="6LY5"/>
<dbReference type="PDBsum" id="6YAC"/>
<dbReference type="PDBsum" id="6YEZ"/>
<dbReference type="PDBsum" id="6ZOO"/>
<dbReference type="PDBsum" id="6ZXS"/>
<dbReference type="PDBsum" id="7DKZ"/>
<dbReference type="EMDB" id="EMD-10746"/>
<dbReference type="EMDB" id="EMD-10798"/>
<dbReference type="EMDB" id="EMD-11326"/>
<dbReference type="EMDB" id="EMD-30012"/>
<dbReference type="SMR" id="P10793"/>
<dbReference type="DIP" id="DIP-60283N"/>
<dbReference type="IntAct" id="P10793">
    <property type="interactions" value="3"/>
</dbReference>
<dbReference type="GeneID" id="9073063"/>
<dbReference type="EvolutionaryTrace" id="P10793"/>
<dbReference type="GO" id="GO:0009535">
    <property type="term" value="C:chloroplast thylakoid membrane"/>
    <property type="evidence" value="ECO:0007669"/>
    <property type="project" value="UniProtKB-SubCell"/>
</dbReference>
<dbReference type="GO" id="GO:0009522">
    <property type="term" value="C:photosystem I"/>
    <property type="evidence" value="ECO:0007669"/>
    <property type="project" value="UniProtKB-KW"/>
</dbReference>
<dbReference type="GO" id="GO:0051539">
    <property type="term" value="F:4 iron, 4 sulfur cluster binding"/>
    <property type="evidence" value="ECO:0007669"/>
    <property type="project" value="UniProtKB-KW"/>
</dbReference>
<dbReference type="GO" id="GO:0009055">
    <property type="term" value="F:electron transfer activity"/>
    <property type="evidence" value="ECO:0007669"/>
    <property type="project" value="UniProtKB-UniRule"/>
</dbReference>
<dbReference type="GO" id="GO:0046872">
    <property type="term" value="F:metal ion binding"/>
    <property type="evidence" value="ECO:0007669"/>
    <property type="project" value="UniProtKB-KW"/>
</dbReference>
<dbReference type="GO" id="GO:0016491">
    <property type="term" value="F:oxidoreductase activity"/>
    <property type="evidence" value="ECO:0007669"/>
    <property type="project" value="UniProtKB-KW"/>
</dbReference>
<dbReference type="GO" id="GO:0009773">
    <property type="term" value="P:photosynthetic electron transport in photosystem I"/>
    <property type="evidence" value="ECO:0007669"/>
    <property type="project" value="InterPro"/>
</dbReference>
<dbReference type="FunFam" id="3.30.70.20:FF:000001">
    <property type="entry name" value="Photosystem I iron-sulfur center"/>
    <property type="match status" value="1"/>
</dbReference>
<dbReference type="Gene3D" id="3.30.70.20">
    <property type="match status" value="1"/>
</dbReference>
<dbReference type="HAMAP" id="MF_01303">
    <property type="entry name" value="PSI_PsaC"/>
    <property type="match status" value="1"/>
</dbReference>
<dbReference type="InterPro" id="IPR017896">
    <property type="entry name" value="4Fe4S_Fe-S-bd"/>
</dbReference>
<dbReference type="InterPro" id="IPR017900">
    <property type="entry name" value="4Fe4S_Fe_S_CS"/>
</dbReference>
<dbReference type="InterPro" id="IPR050157">
    <property type="entry name" value="PSI_iron-sulfur_center"/>
</dbReference>
<dbReference type="InterPro" id="IPR017491">
    <property type="entry name" value="PSI_PsaC"/>
</dbReference>
<dbReference type="NCBIfam" id="TIGR03048">
    <property type="entry name" value="PS_I_psaC"/>
    <property type="match status" value="1"/>
</dbReference>
<dbReference type="PANTHER" id="PTHR24960:SF79">
    <property type="entry name" value="PHOTOSYSTEM I IRON-SULFUR CENTER"/>
    <property type="match status" value="1"/>
</dbReference>
<dbReference type="PANTHER" id="PTHR24960">
    <property type="entry name" value="PHOTOSYSTEM I IRON-SULFUR CENTER-RELATED"/>
    <property type="match status" value="1"/>
</dbReference>
<dbReference type="Pfam" id="PF14697">
    <property type="entry name" value="Fer4_21"/>
    <property type="match status" value="1"/>
</dbReference>
<dbReference type="SUPFAM" id="SSF54862">
    <property type="entry name" value="4Fe-4S ferredoxins"/>
    <property type="match status" value="1"/>
</dbReference>
<dbReference type="PROSITE" id="PS00198">
    <property type="entry name" value="4FE4S_FER_1"/>
    <property type="match status" value="2"/>
</dbReference>
<dbReference type="PROSITE" id="PS51379">
    <property type="entry name" value="4FE4S_FER_2"/>
    <property type="match status" value="2"/>
</dbReference>
<organism>
    <name type="scientific">Pisum sativum</name>
    <name type="common">Garden pea</name>
    <name type="synonym">Lathyrus oleraceus</name>
    <dbReference type="NCBI Taxonomy" id="3888"/>
    <lineage>
        <taxon>Eukaryota</taxon>
        <taxon>Viridiplantae</taxon>
        <taxon>Streptophyta</taxon>
        <taxon>Embryophyta</taxon>
        <taxon>Tracheophyta</taxon>
        <taxon>Spermatophyta</taxon>
        <taxon>Magnoliopsida</taxon>
        <taxon>eudicotyledons</taxon>
        <taxon>Gunneridae</taxon>
        <taxon>Pentapetalae</taxon>
        <taxon>rosids</taxon>
        <taxon>fabids</taxon>
        <taxon>Fabales</taxon>
        <taxon>Fabaceae</taxon>
        <taxon>Papilionoideae</taxon>
        <taxon>50 kb inversion clade</taxon>
        <taxon>NPAAA clade</taxon>
        <taxon>Hologalegina</taxon>
        <taxon>IRL clade</taxon>
        <taxon>Fabeae</taxon>
        <taxon>Pisum</taxon>
    </lineage>
</organism>
<name>PSAC_PEA</name>
<comment type="function">
    <text evidence="1">Apoprotein for the two 4Fe-4S centers FA and FB of photosystem I (PSI); essential for photochemical activity. FB is the terminal electron acceptor of PSI, donating electrons to ferredoxin. The C-terminus interacts with PsaA/B/D and helps assemble the protein into the PSI complex. Required for binding of PsaD and PsaE to PSI. PSI is a plastocyanin-ferredoxin oxidoreductase, converting photonic excitation into a charge separation, which transfers an electron from the donor P700 chlorophyll pair to the spectroscopically characterized acceptors A0, A1, FX, FA and FB in turn.</text>
</comment>
<comment type="catalytic activity">
    <reaction evidence="1">
        <text>reduced [plastocyanin] + hnu + oxidized [2Fe-2S]-[ferredoxin] = oxidized [plastocyanin] + reduced [2Fe-2S]-[ferredoxin]</text>
        <dbReference type="Rhea" id="RHEA:30407"/>
        <dbReference type="Rhea" id="RHEA-COMP:10000"/>
        <dbReference type="Rhea" id="RHEA-COMP:10001"/>
        <dbReference type="Rhea" id="RHEA-COMP:10039"/>
        <dbReference type="Rhea" id="RHEA-COMP:10040"/>
        <dbReference type="ChEBI" id="CHEBI:29036"/>
        <dbReference type="ChEBI" id="CHEBI:30212"/>
        <dbReference type="ChEBI" id="CHEBI:33737"/>
        <dbReference type="ChEBI" id="CHEBI:33738"/>
        <dbReference type="ChEBI" id="CHEBI:49552"/>
        <dbReference type="EC" id="1.97.1.12"/>
    </reaction>
</comment>
<comment type="cofactor">
    <cofactor evidence="1">
        <name>[4Fe-4S] cluster</name>
        <dbReference type="ChEBI" id="CHEBI:49883"/>
    </cofactor>
    <text evidence="1">Binds 2 [4Fe-4S] clusters. Cluster 2 is most probably the spectroscopically characterized electron acceptor FA and cluster 1 is most probably FB.</text>
</comment>
<comment type="subunit">
    <text evidence="1">The eukaryotic PSI reaction center is composed of at least 11 subunits.</text>
</comment>
<comment type="subcellular location">
    <subcellularLocation>
        <location evidence="1">Plastid</location>
        <location evidence="1">Chloroplast thylakoid membrane</location>
        <topology evidence="1">Peripheral membrane protein</topology>
        <orientation evidence="1">Stromal side</orientation>
    </subcellularLocation>
</comment>
<sequence length="81" mass="8980">MSHSVKIYDTCIGCTQCVRACPTDVLEMIPWGGCKAKQIASAPRTEDCVGCKRCESACPTDFLSVRVYLWHETTRSMGLAY</sequence>
<keyword id="KW-0002">3D-structure</keyword>
<keyword id="KW-0004">4Fe-4S</keyword>
<keyword id="KW-0150">Chloroplast</keyword>
<keyword id="KW-0903">Direct protein sequencing</keyword>
<keyword id="KW-0249">Electron transport</keyword>
<keyword id="KW-0408">Iron</keyword>
<keyword id="KW-0411">Iron-sulfur</keyword>
<keyword id="KW-0472">Membrane</keyword>
<keyword id="KW-0479">Metal-binding</keyword>
<keyword id="KW-0560">Oxidoreductase</keyword>
<keyword id="KW-0602">Photosynthesis</keyword>
<keyword id="KW-0603">Photosystem I</keyword>
<keyword id="KW-0934">Plastid</keyword>
<keyword id="KW-0677">Repeat</keyword>
<keyword id="KW-0793">Thylakoid</keyword>
<keyword id="KW-0813">Transport</keyword>
<reference key="1">
    <citation type="journal article" date="1988" name="Plant Mol. Biol.">
        <title>Localization and nucleotide sequence of the gene for the 8 kDa subunit of photosystem I in pea and wheat chloroplast DNA.</title>
        <authorList>
            <person name="Dunn P.P.J."/>
            <person name="Gray J.C."/>
        </authorList>
        <dbReference type="AGRICOLA" id="IND92000055"/>
    </citation>
    <scope>NUCLEOTIDE SEQUENCE [GENOMIC DNA]</scope>
</reference>
<reference key="2">
    <citation type="journal article" date="1988" name="FEBS Lett.">
        <title>N-terminal amino acid sequence analysis of the subunits of pea photosystem I.</title>
        <authorList>
            <person name="Dunn P.P.J."/>
            <person name="Packman L.C."/>
            <person name="Pappin D."/>
            <person name="Gray J.C."/>
        </authorList>
    </citation>
    <scope>PROTEIN SEQUENCE OF 2-49</scope>
</reference>